<gene>
    <name evidence="1" type="primary">lolB</name>
    <name type="ordered locus">CKO_01273</name>
</gene>
<accession>A8AG00</accession>
<protein>
    <recommendedName>
        <fullName evidence="1">Outer-membrane lipoprotein LolB</fullName>
    </recommendedName>
</protein>
<keyword id="KW-0998">Cell outer membrane</keyword>
<keyword id="KW-0143">Chaperone</keyword>
<keyword id="KW-0449">Lipoprotein</keyword>
<keyword id="KW-0472">Membrane</keyword>
<keyword id="KW-0564">Palmitate</keyword>
<keyword id="KW-0653">Protein transport</keyword>
<keyword id="KW-1185">Reference proteome</keyword>
<keyword id="KW-0732">Signal</keyword>
<keyword id="KW-0813">Transport</keyword>
<proteinExistence type="inferred from homology"/>
<feature type="signal peptide" evidence="1">
    <location>
        <begin position="1"/>
        <end position="21"/>
    </location>
</feature>
<feature type="chain" id="PRO_1000021660" description="Outer-membrane lipoprotein LolB">
    <location>
        <begin position="22"/>
        <end position="207"/>
    </location>
</feature>
<feature type="lipid moiety-binding region" description="N-palmitoyl cysteine" evidence="1">
    <location>
        <position position="22"/>
    </location>
</feature>
<feature type="lipid moiety-binding region" description="S-diacylglycerol cysteine" evidence="1">
    <location>
        <position position="22"/>
    </location>
</feature>
<dbReference type="EMBL" id="CP000822">
    <property type="protein sequence ID" value="ABV12413.1"/>
    <property type="molecule type" value="Genomic_DNA"/>
</dbReference>
<dbReference type="RefSeq" id="WP_012132156.1">
    <property type="nucleotide sequence ID" value="NC_009792.1"/>
</dbReference>
<dbReference type="SMR" id="A8AG00"/>
<dbReference type="STRING" id="290338.CKO_01273"/>
<dbReference type="GeneID" id="45135389"/>
<dbReference type="KEGG" id="cko:CKO_01273"/>
<dbReference type="HOGENOM" id="CLU_092816_1_1_6"/>
<dbReference type="OrthoDB" id="9797618at2"/>
<dbReference type="Proteomes" id="UP000008148">
    <property type="component" value="Chromosome"/>
</dbReference>
<dbReference type="GO" id="GO:0009279">
    <property type="term" value="C:cell outer membrane"/>
    <property type="evidence" value="ECO:0007669"/>
    <property type="project" value="UniProtKB-SubCell"/>
</dbReference>
<dbReference type="GO" id="GO:0044874">
    <property type="term" value="P:lipoprotein localization to outer membrane"/>
    <property type="evidence" value="ECO:0007669"/>
    <property type="project" value="UniProtKB-UniRule"/>
</dbReference>
<dbReference type="GO" id="GO:0015031">
    <property type="term" value="P:protein transport"/>
    <property type="evidence" value="ECO:0007669"/>
    <property type="project" value="UniProtKB-KW"/>
</dbReference>
<dbReference type="CDD" id="cd16326">
    <property type="entry name" value="LolB"/>
    <property type="match status" value="1"/>
</dbReference>
<dbReference type="FunFam" id="2.50.20.10:FF:000002">
    <property type="entry name" value="Outer-membrane lipoprotein LolB"/>
    <property type="match status" value="1"/>
</dbReference>
<dbReference type="Gene3D" id="2.50.20.10">
    <property type="entry name" value="Lipoprotein localisation LolA/LolB/LppX"/>
    <property type="match status" value="1"/>
</dbReference>
<dbReference type="HAMAP" id="MF_00233">
    <property type="entry name" value="LolB"/>
    <property type="match status" value="1"/>
</dbReference>
<dbReference type="InterPro" id="IPR029046">
    <property type="entry name" value="LolA/LolB/LppX"/>
</dbReference>
<dbReference type="InterPro" id="IPR004565">
    <property type="entry name" value="OM_lipoprot_LolB"/>
</dbReference>
<dbReference type="NCBIfam" id="TIGR00548">
    <property type="entry name" value="lolB"/>
    <property type="match status" value="1"/>
</dbReference>
<dbReference type="Pfam" id="PF03550">
    <property type="entry name" value="LolB"/>
    <property type="match status" value="1"/>
</dbReference>
<dbReference type="SUPFAM" id="SSF89392">
    <property type="entry name" value="Prokaryotic lipoproteins and lipoprotein localization factors"/>
    <property type="match status" value="1"/>
</dbReference>
<dbReference type="PROSITE" id="PS51257">
    <property type="entry name" value="PROKAR_LIPOPROTEIN"/>
    <property type="match status" value="1"/>
</dbReference>
<name>LOLB_CITK8</name>
<reference key="1">
    <citation type="submission" date="2007-08" db="EMBL/GenBank/DDBJ databases">
        <authorList>
            <consortium name="The Citrobacter koseri Genome Sequencing Project"/>
            <person name="McClelland M."/>
            <person name="Sanderson E.K."/>
            <person name="Porwollik S."/>
            <person name="Spieth J."/>
            <person name="Clifton W.S."/>
            <person name="Latreille P."/>
            <person name="Courtney L."/>
            <person name="Wang C."/>
            <person name="Pepin K."/>
            <person name="Bhonagiri V."/>
            <person name="Nash W."/>
            <person name="Johnson M."/>
            <person name="Thiruvilangam P."/>
            <person name="Wilson R."/>
        </authorList>
    </citation>
    <scope>NUCLEOTIDE SEQUENCE [LARGE SCALE GENOMIC DNA]</scope>
    <source>
        <strain>ATCC BAA-895 / CDC 4225-83 / SGSC4696</strain>
    </source>
</reference>
<comment type="function">
    <text evidence="1">Plays a critical role in the incorporation of lipoproteins in the outer membrane after they are released by the LolA protein.</text>
</comment>
<comment type="subunit">
    <text evidence="1">Monomer.</text>
</comment>
<comment type="subcellular location">
    <subcellularLocation>
        <location evidence="1">Cell outer membrane</location>
        <topology evidence="1">Lipid-anchor</topology>
    </subcellularLocation>
</comment>
<comment type="similarity">
    <text evidence="1">Belongs to the LolB family.</text>
</comment>
<organism>
    <name type="scientific">Citrobacter koseri (strain ATCC BAA-895 / CDC 4225-83 / SGSC4696)</name>
    <dbReference type="NCBI Taxonomy" id="290338"/>
    <lineage>
        <taxon>Bacteria</taxon>
        <taxon>Pseudomonadati</taxon>
        <taxon>Pseudomonadota</taxon>
        <taxon>Gammaproteobacteria</taxon>
        <taxon>Enterobacterales</taxon>
        <taxon>Enterobacteriaceae</taxon>
        <taxon>Citrobacter</taxon>
    </lineage>
</organism>
<sequence>MTLPDFRLIRLLPLASLVLTACTINAPKGPGKSPDSPQWRQHQQDVRKLNQYQTRGAFAYISDDQKVYARFFWQQTGQDRYRLLLTNPLGSTELELNAQPGNVQLVDNKGQRYTADDAEEMIGKLTGMPIPLNSLRQWILGLPGDATDYTLDDQYRLSEVNYHQDGKNWKVVYSGYDSKTQPAMPANMELSDGSQRIKLKMDNWIVK</sequence>
<evidence type="ECO:0000255" key="1">
    <source>
        <dbReference type="HAMAP-Rule" id="MF_00233"/>
    </source>
</evidence>